<reference key="1">
    <citation type="journal article" date="2001" name="Genome Res.">
        <title>The complete genome sequence of the lactic acid bacterium Lactococcus lactis ssp. lactis IL1403.</title>
        <authorList>
            <person name="Bolotin A."/>
            <person name="Wincker P."/>
            <person name="Mauger S."/>
            <person name="Jaillon O."/>
            <person name="Malarme K."/>
            <person name="Weissenbach J."/>
            <person name="Ehrlich S.D."/>
            <person name="Sorokin A."/>
        </authorList>
    </citation>
    <scope>NUCLEOTIDE SEQUENCE [LARGE SCALE GENOMIC DNA]</scope>
    <source>
        <strain>IL1403</strain>
    </source>
</reference>
<gene>
    <name evidence="1" type="primary">glmM</name>
    <name type="ordered locus">LL0424</name>
    <name type="ORF">L35068</name>
</gene>
<evidence type="ECO:0000255" key="1">
    <source>
        <dbReference type="HAMAP-Rule" id="MF_01554"/>
    </source>
</evidence>
<feature type="chain" id="PRO_0000147905" description="Phosphoglucosamine mutase">
    <location>
        <begin position="1"/>
        <end position="452"/>
    </location>
</feature>
<feature type="active site" description="Phosphoserine intermediate" evidence="1">
    <location>
        <position position="101"/>
    </location>
</feature>
<feature type="binding site" description="via phosphate group" evidence="1">
    <location>
        <position position="101"/>
    </location>
    <ligand>
        <name>Mg(2+)</name>
        <dbReference type="ChEBI" id="CHEBI:18420"/>
    </ligand>
</feature>
<feature type="binding site" evidence="1">
    <location>
        <position position="241"/>
    </location>
    <ligand>
        <name>Mg(2+)</name>
        <dbReference type="ChEBI" id="CHEBI:18420"/>
    </ligand>
</feature>
<feature type="binding site" evidence="1">
    <location>
        <position position="243"/>
    </location>
    <ligand>
        <name>Mg(2+)</name>
        <dbReference type="ChEBI" id="CHEBI:18420"/>
    </ligand>
</feature>
<feature type="binding site" evidence="1">
    <location>
        <position position="245"/>
    </location>
    <ligand>
        <name>Mg(2+)</name>
        <dbReference type="ChEBI" id="CHEBI:18420"/>
    </ligand>
</feature>
<feature type="modified residue" description="Phosphoserine" evidence="1">
    <location>
        <position position="101"/>
    </location>
</feature>
<protein>
    <recommendedName>
        <fullName evidence="1">Phosphoglucosamine mutase</fullName>
        <ecNumber evidence="1">5.4.2.10</ecNumber>
    </recommendedName>
</protein>
<keyword id="KW-0002">3D-structure</keyword>
<keyword id="KW-0413">Isomerase</keyword>
<keyword id="KW-0460">Magnesium</keyword>
<keyword id="KW-0479">Metal-binding</keyword>
<keyword id="KW-0597">Phosphoprotein</keyword>
<keyword id="KW-1185">Reference proteome</keyword>
<comment type="function">
    <text evidence="1">Catalyzes the conversion of glucosamine-6-phosphate to glucosamine-1-phosphate.</text>
</comment>
<comment type="catalytic activity">
    <reaction evidence="1">
        <text>alpha-D-glucosamine 1-phosphate = D-glucosamine 6-phosphate</text>
        <dbReference type="Rhea" id="RHEA:23424"/>
        <dbReference type="ChEBI" id="CHEBI:58516"/>
        <dbReference type="ChEBI" id="CHEBI:58725"/>
        <dbReference type="EC" id="5.4.2.10"/>
    </reaction>
</comment>
<comment type="cofactor">
    <cofactor evidence="1">
        <name>Mg(2+)</name>
        <dbReference type="ChEBI" id="CHEBI:18420"/>
    </cofactor>
    <text evidence="1">Binds 1 Mg(2+) ion per subunit.</text>
</comment>
<comment type="PTM">
    <text evidence="1">Activated by phosphorylation.</text>
</comment>
<comment type="similarity">
    <text evidence="1">Belongs to the phosphohexose mutase family.</text>
</comment>
<name>GLMM_LACLA</name>
<sequence>MGKYFGTDGVRGEANVELTPEMAFKLGRFGGYVLSQHELGTPKVYVGRDTRISGQMLASSLISGLLSVGIEVYDLGVIATPGVAYLVKKDGASAGVMISASHNPALDNGIKFFGGDGYKLEDEKELEIEALIDAEEDTLPRPSAQGLGMLHDYIEGVRKYQAFLKTTAEGNFEGYKVVLDTANGAAYTSARAVFADLEANLTVIGENPDGLNINVKVGSTHPEAMAKKVVETGSDLGLAFDGDADRLIAVDENGEIVDGDKIMFIVGKYLLGQGKLAQDTLVTTVMSNLGFHLALEEAGINSVITAVGDRYVVEEMKKNNYNFGGEQSGHMIFLDYNTTGDGQLSAIQLLKVMRETGKSLSELASEVTIYPQKLVNVRVKDNAAKKSAMDVPAIQKVISEMETSMNGKGRILVRPSGTEPLLRVMAEAPTHEEVNHVVDTIVEVVEAEIGVK</sequence>
<dbReference type="EC" id="5.4.2.10" evidence="1"/>
<dbReference type="EMBL" id="AE005176">
    <property type="protein sequence ID" value="AAK04522.1"/>
    <property type="molecule type" value="Genomic_DNA"/>
</dbReference>
<dbReference type="PIR" id="H86677">
    <property type="entry name" value="H86677"/>
</dbReference>
<dbReference type="RefSeq" id="NP_266580.1">
    <property type="nucleotide sequence ID" value="NC_002662.1"/>
</dbReference>
<dbReference type="RefSeq" id="WP_003131539.1">
    <property type="nucleotide sequence ID" value="NC_002662.1"/>
</dbReference>
<dbReference type="PDB" id="9G69">
    <property type="method" value="EM"/>
    <property type="resolution" value="4.84 A"/>
    <property type="chains" value="A/B=1-452"/>
</dbReference>
<dbReference type="PDBsum" id="9G69"/>
<dbReference type="EMDB" id="EMD-51096"/>
<dbReference type="SMR" id="Q9CID9"/>
<dbReference type="PaxDb" id="272623-L35068"/>
<dbReference type="EnsemblBacteria" id="AAK04522">
    <property type="protein sequence ID" value="AAK04522"/>
    <property type="gene ID" value="L35068"/>
</dbReference>
<dbReference type="GeneID" id="89632600"/>
<dbReference type="KEGG" id="lla:L35068"/>
<dbReference type="PATRIC" id="fig|272623.7.peg.462"/>
<dbReference type="eggNOG" id="COG1109">
    <property type="taxonomic scope" value="Bacteria"/>
</dbReference>
<dbReference type="HOGENOM" id="CLU_016950_7_0_9"/>
<dbReference type="OrthoDB" id="9806956at2"/>
<dbReference type="Proteomes" id="UP000002196">
    <property type="component" value="Chromosome"/>
</dbReference>
<dbReference type="GO" id="GO:0005829">
    <property type="term" value="C:cytosol"/>
    <property type="evidence" value="ECO:0007669"/>
    <property type="project" value="TreeGrafter"/>
</dbReference>
<dbReference type="GO" id="GO:0000287">
    <property type="term" value="F:magnesium ion binding"/>
    <property type="evidence" value="ECO:0007669"/>
    <property type="project" value="UniProtKB-UniRule"/>
</dbReference>
<dbReference type="GO" id="GO:0008966">
    <property type="term" value="F:phosphoglucosamine mutase activity"/>
    <property type="evidence" value="ECO:0007669"/>
    <property type="project" value="UniProtKB-UniRule"/>
</dbReference>
<dbReference type="GO" id="GO:0004615">
    <property type="term" value="F:phosphomannomutase activity"/>
    <property type="evidence" value="ECO:0007669"/>
    <property type="project" value="TreeGrafter"/>
</dbReference>
<dbReference type="GO" id="GO:0005975">
    <property type="term" value="P:carbohydrate metabolic process"/>
    <property type="evidence" value="ECO:0007669"/>
    <property type="project" value="InterPro"/>
</dbReference>
<dbReference type="GO" id="GO:0009252">
    <property type="term" value="P:peptidoglycan biosynthetic process"/>
    <property type="evidence" value="ECO:0007669"/>
    <property type="project" value="TreeGrafter"/>
</dbReference>
<dbReference type="GO" id="GO:0006048">
    <property type="term" value="P:UDP-N-acetylglucosamine biosynthetic process"/>
    <property type="evidence" value="ECO:0007669"/>
    <property type="project" value="TreeGrafter"/>
</dbReference>
<dbReference type="CDD" id="cd05802">
    <property type="entry name" value="GlmM"/>
    <property type="match status" value="1"/>
</dbReference>
<dbReference type="FunFam" id="3.30.310.50:FF:000001">
    <property type="entry name" value="Phosphoglucosamine mutase"/>
    <property type="match status" value="1"/>
</dbReference>
<dbReference type="FunFam" id="3.40.120.10:FF:000001">
    <property type="entry name" value="Phosphoglucosamine mutase"/>
    <property type="match status" value="1"/>
</dbReference>
<dbReference type="FunFam" id="3.40.120.10:FF:000002">
    <property type="entry name" value="Phosphoglucosamine mutase"/>
    <property type="match status" value="1"/>
</dbReference>
<dbReference type="Gene3D" id="3.40.120.10">
    <property type="entry name" value="Alpha-D-Glucose-1,6-Bisphosphate, subunit A, domain 3"/>
    <property type="match status" value="3"/>
</dbReference>
<dbReference type="Gene3D" id="3.30.310.50">
    <property type="entry name" value="Alpha-D-phosphohexomutase, C-terminal domain"/>
    <property type="match status" value="1"/>
</dbReference>
<dbReference type="HAMAP" id="MF_01554_B">
    <property type="entry name" value="GlmM_B"/>
    <property type="match status" value="1"/>
</dbReference>
<dbReference type="InterPro" id="IPR005844">
    <property type="entry name" value="A-D-PHexomutase_a/b/a-I"/>
</dbReference>
<dbReference type="InterPro" id="IPR016055">
    <property type="entry name" value="A-D-PHexomutase_a/b/a-I/II/III"/>
</dbReference>
<dbReference type="InterPro" id="IPR005845">
    <property type="entry name" value="A-D-PHexomutase_a/b/a-II"/>
</dbReference>
<dbReference type="InterPro" id="IPR005846">
    <property type="entry name" value="A-D-PHexomutase_a/b/a-III"/>
</dbReference>
<dbReference type="InterPro" id="IPR005843">
    <property type="entry name" value="A-D-PHexomutase_C"/>
</dbReference>
<dbReference type="InterPro" id="IPR036900">
    <property type="entry name" value="A-D-PHexomutase_C_sf"/>
</dbReference>
<dbReference type="InterPro" id="IPR016066">
    <property type="entry name" value="A-D-PHexomutase_CS"/>
</dbReference>
<dbReference type="InterPro" id="IPR005841">
    <property type="entry name" value="Alpha-D-phosphohexomutase_SF"/>
</dbReference>
<dbReference type="InterPro" id="IPR006352">
    <property type="entry name" value="GlmM_bact"/>
</dbReference>
<dbReference type="InterPro" id="IPR050060">
    <property type="entry name" value="Phosphoglucosamine_mutase"/>
</dbReference>
<dbReference type="NCBIfam" id="TIGR01455">
    <property type="entry name" value="glmM"/>
    <property type="match status" value="1"/>
</dbReference>
<dbReference type="PANTHER" id="PTHR42946:SF1">
    <property type="entry name" value="PHOSPHOGLUCOMUTASE (ALPHA-D-GLUCOSE-1,6-BISPHOSPHATE-DEPENDENT)"/>
    <property type="match status" value="1"/>
</dbReference>
<dbReference type="PANTHER" id="PTHR42946">
    <property type="entry name" value="PHOSPHOHEXOSE MUTASE"/>
    <property type="match status" value="1"/>
</dbReference>
<dbReference type="Pfam" id="PF02878">
    <property type="entry name" value="PGM_PMM_I"/>
    <property type="match status" value="1"/>
</dbReference>
<dbReference type="Pfam" id="PF02879">
    <property type="entry name" value="PGM_PMM_II"/>
    <property type="match status" value="1"/>
</dbReference>
<dbReference type="Pfam" id="PF02880">
    <property type="entry name" value="PGM_PMM_III"/>
    <property type="match status" value="1"/>
</dbReference>
<dbReference type="Pfam" id="PF00408">
    <property type="entry name" value="PGM_PMM_IV"/>
    <property type="match status" value="1"/>
</dbReference>
<dbReference type="PRINTS" id="PR00509">
    <property type="entry name" value="PGMPMM"/>
</dbReference>
<dbReference type="SUPFAM" id="SSF55957">
    <property type="entry name" value="Phosphoglucomutase, C-terminal domain"/>
    <property type="match status" value="1"/>
</dbReference>
<dbReference type="SUPFAM" id="SSF53738">
    <property type="entry name" value="Phosphoglucomutase, first 3 domains"/>
    <property type="match status" value="3"/>
</dbReference>
<dbReference type="PROSITE" id="PS00710">
    <property type="entry name" value="PGM_PMM"/>
    <property type="match status" value="1"/>
</dbReference>
<accession>Q9CID9</accession>
<organism>
    <name type="scientific">Lactococcus lactis subsp. lactis (strain IL1403)</name>
    <name type="common">Streptococcus lactis</name>
    <dbReference type="NCBI Taxonomy" id="272623"/>
    <lineage>
        <taxon>Bacteria</taxon>
        <taxon>Bacillati</taxon>
        <taxon>Bacillota</taxon>
        <taxon>Bacilli</taxon>
        <taxon>Lactobacillales</taxon>
        <taxon>Streptococcaceae</taxon>
        <taxon>Lactococcus</taxon>
    </lineage>
</organism>
<proteinExistence type="evidence at protein level"/>